<feature type="chain" id="PRO_0000402026" description="Methylthioribose-1-phosphate isomerase">
    <location>
        <begin position="1"/>
        <end position="393"/>
    </location>
</feature>
<feature type="active site" description="Proton donor" evidence="1">
    <location>
        <position position="265"/>
    </location>
</feature>
<feature type="site" description="Transition state stabilizer" evidence="1">
    <location>
        <position position="185"/>
    </location>
</feature>
<organism>
    <name type="scientific">Cryptococcus neoformans var. neoformans serotype D (strain JEC21 / ATCC MYA-565)</name>
    <name type="common">Filobasidiella neoformans</name>
    <dbReference type="NCBI Taxonomy" id="214684"/>
    <lineage>
        <taxon>Eukaryota</taxon>
        <taxon>Fungi</taxon>
        <taxon>Dikarya</taxon>
        <taxon>Basidiomycota</taxon>
        <taxon>Agaricomycotina</taxon>
        <taxon>Tremellomycetes</taxon>
        <taxon>Tremellales</taxon>
        <taxon>Cryptococcaceae</taxon>
        <taxon>Cryptococcus</taxon>
        <taxon>Cryptococcus neoformans species complex</taxon>
    </lineage>
</organism>
<keyword id="KW-0028">Amino-acid biosynthesis</keyword>
<keyword id="KW-0963">Cytoplasm</keyword>
<keyword id="KW-0413">Isomerase</keyword>
<keyword id="KW-0486">Methionine biosynthesis</keyword>
<keyword id="KW-0539">Nucleus</keyword>
<keyword id="KW-1185">Reference proteome</keyword>
<comment type="function">
    <text evidence="1">Catalyzes the interconversion of methylthioribose-1-phosphate (MTR-1-P) into methylthioribulose-1-phosphate (MTRu-1-P).</text>
</comment>
<comment type="catalytic activity">
    <reaction evidence="1">
        <text>5-(methylsulfanyl)-alpha-D-ribose 1-phosphate = 5-(methylsulfanyl)-D-ribulose 1-phosphate</text>
        <dbReference type="Rhea" id="RHEA:19989"/>
        <dbReference type="ChEBI" id="CHEBI:58533"/>
        <dbReference type="ChEBI" id="CHEBI:58548"/>
        <dbReference type="EC" id="5.3.1.23"/>
    </reaction>
</comment>
<comment type="pathway">
    <text evidence="1">Amino-acid biosynthesis; L-methionine biosynthesis via salvage pathway; L-methionine from S-methyl-5-thio-alpha-D-ribose 1-phosphate: step 1/6.</text>
</comment>
<comment type="subcellular location">
    <subcellularLocation>
        <location evidence="1">Cytoplasm</location>
    </subcellularLocation>
    <subcellularLocation>
        <location evidence="1">Nucleus</location>
    </subcellularLocation>
</comment>
<comment type="similarity">
    <text evidence="1">Belongs to the eIF-2B alpha/beta/delta subunits family. MtnA subfamily.</text>
</comment>
<dbReference type="EC" id="5.3.1.23" evidence="1"/>
<dbReference type="EMBL" id="AE017349">
    <property type="protein sequence ID" value="AAW45578.1"/>
    <property type="molecule type" value="Genomic_DNA"/>
</dbReference>
<dbReference type="RefSeq" id="XP_572885.1">
    <property type="nucleotide sequence ID" value="XM_572885.1"/>
</dbReference>
<dbReference type="SMR" id="P0CN40"/>
<dbReference type="FunCoup" id="P0CN40">
    <property type="interactions" value="263"/>
</dbReference>
<dbReference type="STRING" id="214684.P0CN40"/>
<dbReference type="PaxDb" id="214684-P0CN40"/>
<dbReference type="EnsemblFungi" id="AAW45578">
    <property type="protein sequence ID" value="AAW45578"/>
    <property type="gene ID" value="CNI02750"/>
</dbReference>
<dbReference type="GeneID" id="3259659"/>
<dbReference type="KEGG" id="cne:CNI02750"/>
<dbReference type="VEuPathDB" id="FungiDB:CNI02750"/>
<dbReference type="eggNOG" id="KOG1468">
    <property type="taxonomic scope" value="Eukaryota"/>
</dbReference>
<dbReference type="HOGENOM" id="CLU_016218_1_3_1"/>
<dbReference type="InParanoid" id="P0CN40"/>
<dbReference type="OMA" id="CETRPLN"/>
<dbReference type="OrthoDB" id="2461at2759"/>
<dbReference type="UniPathway" id="UPA00904">
    <property type="reaction ID" value="UER00874"/>
</dbReference>
<dbReference type="Proteomes" id="UP000002149">
    <property type="component" value="Chromosome 9"/>
</dbReference>
<dbReference type="GO" id="GO:0005737">
    <property type="term" value="C:cytoplasm"/>
    <property type="evidence" value="ECO:0007669"/>
    <property type="project" value="UniProtKB-SubCell"/>
</dbReference>
<dbReference type="GO" id="GO:0005634">
    <property type="term" value="C:nucleus"/>
    <property type="evidence" value="ECO:0007669"/>
    <property type="project" value="UniProtKB-SubCell"/>
</dbReference>
<dbReference type="GO" id="GO:0046523">
    <property type="term" value="F:S-methyl-5-thioribose-1-phosphate isomerase activity"/>
    <property type="evidence" value="ECO:0000318"/>
    <property type="project" value="GO_Central"/>
</dbReference>
<dbReference type="GO" id="GO:0019509">
    <property type="term" value="P:L-methionine salvage from methylthioadenosine"/>
    <property type="evidence" value="ECO:0000318"/>
    <property type="project" value="GO_Central"/>
</dbReference>
<dbReference type="FunFam" id="1.20.120.420:FF:000003">
    <property type="entry name" value="Methylthioribose-1-phosphate isomerase"/>
    <property type="match status" value="1"/>
</dbReference>
<dbReference type="FunFam" id="3.40.50.10470:FF:000013">
    <property type="entry name" value="Methylthioribose-1-phosphate isomerase"/>
    <property type="match status" value="1"/>
</dbReference>
<dbReference type="Gene3D" id="1.20.120.420">
    <property type="entry name" value="translation initiation factor eif-2b, domain 1"/>
    <property type="match status" value="1"/>
</dbReference>
<dbReference type="Gene3D" id="3.40.50.10470">
    <property type="entry name" value="Translation initiation factor eif-2b, domain 2"/>
    <property type="match status" value="1"/>
</dbReference>
<dbReference type="HAMAP" id="MF_01678">
    <property type="entry name" value="Salvage_MtnA"/>
    <property type="match status" value="1"/>
</dbReference>
<dbReference type="InterPro" id="IPR000649">
    <property type="entry name" value="IF-2B-related"/>
</dbReference>
<dbReference type="InterPro" id="IPR005251">
    <property type="entry name" value="IF-M1Pi"/>
</dbReference>
<dbReference type="InterPro" id="IPR042529">
    <property type="entry name" value="IF_2B-like_C"/>
</dbReference>
<dbReference type="InterPro" id="IPR011559">
    <property type="entry name" value="Initiation_fac_2B_a/b/d"/>
</dbReference>
<dbReference type="InterPro" id="IPR027363">
    <property type="entry name" value="M1Pi_N"/>
</dbReference>
<dbReference type="InterPro" id="IPR037171">
    <property type="entry name" value="NagB/RpiA_transferase-like"/>
</dbReference>
<dbReference type="NCBIfam" id="TIGR00524">
    <property type="entry name" value="eIF-2B_rel"/>
    <property type="match status" value="1"/>
</dbReference>
<dbReference type="NCBIfam" id="NF004326">
    <property type="entry name" value="PRK05720.1"/>
    <property type="match status" value="1"/>
</dbReference>
<dbReference type="NCBIfam" id="TIGR00512">
    <property type="entry name" value="salvage_mtnA"/>
    <property type="match status" value="1"/>
</dbReference>
<dbReference type="PANTHER" id="PTHR43475">
    <property type="entry name" value="METHYLTHIORIBOSE-1-PHOSPHATE ISOMERASE"/>
    <property type="match status" value="1"/>
</dbReference>
<dbReference type="PANTHER" id="PTHR43475:SF1">
    <property type="entry name" value="METHYLTHIORIBOSE-1-PHOSPHATE ISOMERASE"/>
    <property type="match status" value="1"/>
</dbReference>
<dbReference type="Pfam" id="PF01008">
    <property type="entry name" value="IF-2B"/>
    <property type="match status" value="1"/>
</dbReference>
<dbReference type="SUPFAM" id="SSF100950">
    <property type="entry name" value="NagB/RpiA/CoA transferase-like"/>
    <property type="match status" value="1"/>
</dbReference>
<accession>P0CN40</accession>
<accession>Q55N23</accession>
<accession>Q5KBF2</accession>
<protein>
    <recommendedName>
        <fullName evidence="1">Methylthioribose-1-phosphate isomerase</fullName>
        <shortName evidence="1">M1Pi</shortName>
        <shortName evidence="1">MTR-1-P isomerase</shortName>
        <ecNumber evidence="1">5.3.1.23</ecNumber>
    </recommendedName>
    <alternativeName>
        <fullName evidence="1">S-methyl-5-thioribose-1-phosphate isomerase</fullName>
    </alternativeName>
    <alternativeName>
        <fullName evidence="1">Translation initiation factor eIF-2B subunit alpha/beta/delta-like protein</fullName>
    </alternativeName>
</protein>
<reference key="1">
    <citation type="journal article" date="2005" name="Science">
        <title>The genome of the basidiomycetous yeast and human pathogen Cryptococcus neoformans.</title>
        <authorList>
            <person name="Loftus B.J."/>
            <person name="Fung E."/>
            <person name="Roncaglia P."/>
            <person name="Rowley D."/>
            <person name="Amedeo P."/>
            <person name="Bruno D."/>
            <person name="Vamathevan J."/>
            <person name="Miranda M."/>
            <person name="Anderson I.J."/>
            <person name="Fraser J.A."/>
            <person name="Allen J.E."/>
            <person name="Bosdet I.E."/>
            <person name="Brent M.R."/>
            <person name="Chiu R."/>
            <person name="Doering T.L."/>
            <person name="Donlin M.J."/>
            <person name="D'Souza C.A."/>
            <person name="Fox D.S."/>
            <person name="Grinberg V."/>
            <person name="Fu J."/>
            <person name="Fukushima M."/>
            <person name="Haas B.J."/>
            <person name="Huang J.C."/>
            <person name="Janbon G."/>
            <person name="Jones S.J.M."/>
            <person name="Koo H.L."/>
            <person name="Krzywinski M.I."/>
            <person name="Kwon-Chung K.J."/>
            <person name="Lengeler K.B."/>
            <person name="Maiti R."/>
            <person name="Marra M.A."/>
            <person name="Marra R.E."/>
            <person name="Mathewson C.A."/>
            <person name="Mitchell T.G."/>
            <person name="Pertea M."/>
            <person name="Riggs F.R."/>
            <person name="Salzberg S.L."/>
            <person name="Schein J.E."/>
            <person name="Shvartsbeyn A."/>
            <person name="Shin H."/>
            <person name="Shumway M."/>
            <person name="Specht C.A."/>
            <person name="Suh B.B."/>
            <person name="Tenney A."/>
            <person name="Utterback T.R."/>
            <person name="Wickes B.L."/>
            <person name="Wortman J.R."/>
            <person name="Wye N.H."/>
            <person name="Kronstad J.W."/>
            <person name="Lodge J.K."/>
            <person name="Heitman J."/>
            <person name="Davis R.W."/>
            <person name="Fraser C.M."/>
            <person name="Hyman R.W."/>
        </authorList>
    </citation>
    <scope>NUCLEOTIDE SEQUENCE [LARGE SCALE GENOMIC DNA]</scope>
    <source>
        <strain>JEC21 / ATCC MYA-565</strain>
    </source>
</reference>
<name>MTNA_CRYNJ</name>
<proteinExistence type="inferred from homology"/>
<sequence length="393" mass="42378">MVAAAPSNKERLPDMMTSIRLDQSGRVEIIDQLLLPHSVVWMPVSTPEEAFDAIKTMRIRGAPAIASLAALTLRSYLSSSSSPVSSSSSSSDVISWVGQTIDYLQSSRPTAVNLGEAMDRIRAALKDSEAQNQTAGDIIQRVKKICGDVHDEDLERNMKMGRLGAEWLWKKRGGGKKGLKVMTVCNTGSLATSGYGTAIGVITALFQEDHLDTAYYAQTTPYHQGSRLTSLELTTLQIPACMICDTMLGSLFQHEDIDGVIVGADRVVKNGDTANKIGTYQAAVLAQRHNVPFMVVAPVTTIDLSLPTGAEIHIEHRPAAEATQVRGLDTETGKLSVVRITPEGVGEGDKPWQRVYNPSFDVTPAELISAVVTEKGVAERKEGEKSIDVASIC</sequence>
<gene>
    <name evidence="1" type="primary">MRI1</name>
    <name type="ordered locus">CNI02750</name>
</gene>
<evidence type="ECO:0000255" key="1">
    <source>
        <dbReference type="HAMAP-Rule" id="MF_03119"/>
    </source>
</evidence>